<organism>
    <name type="scientific">Polaromonas sp. (strain JS666 / ATCC BAA-500)</name>
    <dbReference type="NCBI Taxonomy" id="296591"/>
    <lineage>
        <taxon>Bacteria</taxon>
        <taxon>Pseudomonadati</taxon>
        <taxon>Pseudomonadota</taxon>
        <taxon>Betaproteobacteria</taxon>
        <taxon>Burkholderiales</taxon>
        <taxon>Comamonadaceae</taxon>
        <taxon>Polaromonas</taxon>
    </lineage>
</organism>
<proteinExistence type="inferred from homology"/>
<evidence type="ECO:0000255" key="1">
    <source>
        <dbReference type="HAMAP-Rule" id="MF_01694"/>
    </source>
</evidence>
<evidence type="ECO:0000255" key="2">
    <source>
        <dbReference type="PROSITE-ProRule" id="PRU01266"/>
    </source>
</evidence>
<evidence type="ECO:0000256" key="3">
    <source>
        <dbReference type="SAM" id="MobiDB-lite"/>
    </source>
</evidence>
<dbReference type="EC" id="2.8.1.6" evidence="1"/>
<dbReference type="EMBL" id="CP000316">
    <property type="protein sequence ID" value="ABE42853.1"/>
    <property type="molecule type" value="Genomic_DNA"/>
</dbReference>
<dbReference type="RefSeq" id="WP_011481855.1">
    <property type="nucleotide sequence ID" value="NC_007948.1"/>
</dbReference>
<dbReference type="SMR" id="Q12F39"/>
<dbReference type="STRING" id="296591.Bpro_0897"/>
<dbReference type="KEGG" id="pol:Bpro_0897"/>
<dbReference type="eggNOG" id="COG0502">
    <property type="taxonomic scope" value="Bacteria"/>
</dbReference>
<dbReference type="HOGENOM" id="CLU_033172_1_2_4"/>
<dbReference type="OrthoDB" id="9786826at2"/>
<dbReference type="UniPathway" id="UPA00078">
    <property type="reaction ID" value="UER00162"/>
</dbReference>
<dbReference type="Proteomes" id="UP000001983">
    <property type="component" value="Chromosome"/>
</dbReference>
<dbReference type="GO" id="GO:0051537">
    <property type="term" value="F:2 iron, 2 sulfur cluster binding"/>
    <property type="evidence" value="ECO:0007669"/>
    <property type="project" value="UniProtKB-KW"/>
</dbReference>
<dbReference type="GO" id="GO:0051539">
    <property type="term" value="F:4 iron, 4 sulfur cluster binding"/>
    <property type="evidence" value="ECO:0007669"/>
    <property type="project" value="UniProtKB-KW"/>
</dbReference>
<dbReference type="GO" id="GO:0004076">
    <property type="term" value="F:biotin synthase activity"/>
    <property type="evidence" value="ECO:0007669"/>
    <property type="project" value="UniProtKB-UniRule"/>
</dbReference>
<dbReference type="GO" id="GO:0005506">
    <property type="term" value="F:iron ion binding"/>
    <property type="evidence" value="ECO:0007669"/>
    <property type="project" value="UniProtKB-UniRule"/>
</dbReference>
<dbReference type="GO" id="GO:0009102">
    <property type="term" value="P:biotin biosynthetic process"/>
    <property type="evidence" value="ECO:0007669"/>
    <property type="project" value="UniProtKB-UniRule"/>
</dbReference>
<dbReference type="CDD" id="cd01335">
    <property type="entry name" value="Radical_SAM"/>
    <property type="match status" value="1"/>
</dbReference>
<dbReference type="FunFam" id="3.20.20.70:FF:000011">
    <property type="entry name" value="Biotin synthase"/>
    <property type="match status" value="1"/>
</dbReference>
<dbReference type="Gene3D" id="3.20.20.70">
    <property type="entry name" value="Aldolase class I"/>
    <property type="match status" value="1"/>
</dbReference>
<dbReference type="HAMAP" id="MF_01694">
    <property type="entry name" value="BioB"/>
    <property type="match status" value="1"/>
</dbReference>
<dbReference type="InterPro" id="IPR013785">
    <property type="entry name" value="Aldolase_TIM"/>
</dbReference>
<dbReference type="InterPro" id="IPR010722">
    <property type="entry name" value="BATS_dom"/>
</dbReference>
<dbReference type="InterPro" id="IPR002684">
    <property type="entry name" value="Biotin_synth/BioAB"/>
</dbReference>
<dbReference type="InterPro" id="IPR024177">
    <property type="entry name" value="Biotin_synthase"/>
</dbReference>
<dbReference type="InterPro" id="IPR006638">
    <property type="entry name" value="Elp3/MiaA/NifB-like_rSAM"/>
</dbReference>
<dbReference type="InterPro" id="IPR007197">
    <property type="entry name" value="rSAM"/>
</dbReference>
<dbReference type="NCBIfam" id="TIGR00433">
    <property type="entry name" value="bioB"/>
    <property type="match status" value="1"/>
</dbReference>
<dbReference type="PANTHER" id="PTHR22976">
    <property type="entry name" value="BIOTIN SYNTHASE"/>
    <property type="match status" value="1"/>
</dbReference>
<dbReference type="PANTHER" id="PTHR22976:SF2">
    <property type="entry name" value="BIOTIN SYNTHASE, MITOCHONDRIAL"/>
    <property type="match status" value="1"/>
</dbReference>
<dbReference type="Pfam" id="PF06968">
    <property type="entry name" value="BATS"/>
    <property type="match status" value="1"/>
</dbReference>
<dbReference type="Pfam" id="PF04055">
    <property type="entry name" value="Radical_SAM"/>
    <property type="match status" value="1"/>
</dbReference>
<dbReference type="PIRSF" id="PIRSF001619">
    <property type="entry name" value="Biotin_synth"/>
    <property type="match status" value="1"/>
</dbReference>
<dbReference type="SFLD" id="SFLDG01060">
    <property type="entry name" value="BATS_domain_containing"/>
    <property type="match status" value="1"/>
</dbReference>
<dbReference type="SFLD" id="SFLDF00272">
    <property type="entry name" value="biotin_synthase"/>
    <property type="match status" value="1"/>
</dbReference>
<dbReference type="SMART" id="SM00876">
    <property type="entry name" value="BATS"/>
    <property type="match status" value="1"/>
</dbReference>
<dbReference type="SMART" id="SM00729">
    <property type="entry name" value="Elp3"/>
    <property type="match status" value="1"/>
</dbReference>
<dbReference type="SUPFAM" id="SSF102114">
    <property type="entry name" value="Radical SAM enzymes"/>
    <property type="match status" value="1"/>
</dbReference>
<dbReference type="PROSITE" id="PS51918">
    <property type="entry name" value="RADICAL_SAM"/>
    <property type="match status" value="1"/>
</dbReference>
<name>BIOB1_POLSJ</name>
<gene>
    <name evidence="1" type="primary">bioB1</name>
    <name type="ordered locus">Bpro_0897</name>
</gene>
<reference key="1">
    <citation type="journal article" date="2008" name="Appl. Environ. Microbiol.">
        <title>The genome of Polaromonas sp. strain JS666: insights into the evolution of a hydrocarbon- and xenobiotic-degrading bacterium, and features of relevance to biotechnology.</title>
        <authorList>
            <person name="Mattes T.E."/>
            <person name="Alexander A.K."/>
            <person name="Richardson P.M."/>
            <person name="Munk A.C."/>
            <person name="Han C.S."/>
            <person name="Stothard P."/>
            <person name="Coleman N.V."/>
        </authorList>
    </citation>
    <scope>NUCLEOTIDE SEQUENCE [LARGE SCALE GENOMIC DNA]</scope>
    <source>
        <strain>JS666 / ATCC BAA-500</strain>
    </source>
</reference>
<feature type="chain" id="PRO_0000381529" description="Biotin synthase 1">
    <location>
        <begin position="1"/>
        <end position="337"/>
    </location>
</feature>
<feature type="domain" description="Radical SAM core" evidence="2">
    <location>
        <begin position="57"/>
        <end position="284"/>
    </location>
</feature>
<feature type="region of interest" description="Disordered" evidence="3">
    <location>
        <begin position="1"/>
        <end position="23"/>
    </location>
</feature>
<feature type="binding site" evidence="1">
    <location>
        <position position="72"/>
    </location>
    <ligand>
        <name>[4Fe-4S] cluster</name>
        <dbReference type="ChEBI" id="CHEBI:49883"/>
        <note>4Fe-4S-S-AdoMet</note>
    </ligand>
</feature>
<feature type="binding site" evidence="1">
    <location>
        <position position="76"/>
    </location>
    <ligand>
        <name>[4Fe-4S] cluster</name>
        <dbReference type="ChEBI" id="CHEBI:49883"/>
        <note>4Fe-4S-S-AdoMet</note>
    </ligand>
</feature>
<feature type="binding site" evidence="1">
    <location>
        <position position="79"/>
    </location>
    <ligand>
        <name>[4Fe-4S] cluster</name>
        <dbReference type="ChEBI" id="CHEBI:49883"/>
        <note>4Fe-4S-S-AdoMet</note>
    </ligand>
</feature>
<feature type="binding site" evidence="1">
    <location>
        <position position="116"/>
    </location>
    <ligand>
        <name>[2Fe-2S] cluster</name>
        <dbReference type="ChEBI" id="CHEBI:190135"/>
    </ligand>
</feature>
<feature type="binding site" evidence="1">
    <location>
        <position position="147"/>
    </location>
    <ligand>
        <name>[2Fe-2S] cluster</name>
        <dbReference type="ChEBI" id="CHEBI:190135"/>
    </ligand>
</feature>
<feature type="binding site" evidence="1">
    <location>
        <position position="207"/>
    </location>
    <ligand>
        <name>[2Fe-2S] cluster</name>
        <dbReference type="ChEBI" id="CHEBI:190135"/>
    </ligand>
</feature>
<feature type="binding site" evidence="1">
    <location>
        <position position="279"/>
    </location>
    <ligand>
        <name>[2Fe-2S] cluster</name>
        <dbReference type="ChEBI" id="CHEBI:190135"/>
    </ligand>
</feature>
<protein>
    <recommendedName>
        <fullName evidence="1">Biotin synthase 1</fullName>
        <ecNumber evidence="1">2.8.1.6</ecNumber>
    </recommendedName>
</protein>
<sequence length="337" mass="36665">MSSVLTQPLAFHPPRPAVQPREHGRWSVDEIEALFNLPFPELMHRAQTVHRENFDPTRVEFATLLSVKTGGCAEDCGYCPQAARYDTGVEASKLMEPAEVLAAAQRAQAAGATRFCMGAAWRSPKDRDIEKVAELVRTVKALGLETCATLGMLEDGHAQTLQSAGLDYYNHNLDSAPDFYGDIITTRDYQDRLDTLARVRSAGVKVCCGGIVGMGETRRQRAGLVAELANLTPYPESVPINNLVKVEGTPLANQADLDPFEFVRTIAVARITMPTARVRLSAGRQQMGDGVQALCFLAGANSIFYGDKLLTTGNPDTEADVTLLQRLGMSRSAPDVR</sequence>
<accession>Q12F39</accession>
<comment type="function">
    <text evidence="1">Catalyzes the conversion of dethiobiotin (DTB) to biotin by the insertion of a sulfur atom into dethiobiotin via a radical-based mechanism.</text>
</comment>
<comment type="catalytic activity">
    <reaction evidence="1">
        <text>(4R,5S)-dethiobiotin + (sulfur carrier)-SH + 2 reduced [2Fe-2S]-[ferredoxin] + 2 S-adenosyl-L-methionine = (sulfur carrier)-H + biotin + 2 5'-deoxyadenosine + 2 L-methionine + 2 oxidized [2Fe-2S]-[ferredoxin]</text>
        <dbReference type="Rhea" id="RHEA:22060"/>
        <dbReference type="Rhea" id="RHEA-COMP:10000"/>
        <dbReference type="Rhea" id="RHEA-COMP:10001"/>
        <dbReference type="Rhea" id="RHEA-COMP:14737"/>
        <dbReference type="Rhea" id="RHEA-COMP:14739"/>
        <dbReference type="ChEBI" id="CHEBI:17319"/>
        <dbReference type="ChEBI" id="CHEBI:29917"/>
        <dbReference type="ChEBI" id="CHEBI:33737"/>
        <dbReference type="ChEBI" id="CHEBI:33738"/>
        <dbReference type="ChEBI" id="CHEBI:57586"/>
        <dbReference type="ChEBI" id="CHEBI:57844"/>
        <dbReference type="ChEBI" id="CHEBI:59789"/>
        <dbReference type="ChEBI" id="CHEBI:64428"/>
        <dbReference type="ChEBI" id="CHEBI:149473"/>
        <dbReference type="EC" id="2.8.1.6"/>
    </reaction>
</comment>
<comment type="cofactor">
    <cofactor evidence="1">
        <name>[4Fe-4S] cluster</name>
        <dbReference type="ChEBI" id="CHEBI:49883"/>
    </cofactor>
    <text evidence="1">Binds 1 [4Fe-4S] cluster. The cluster is coordinated with 3 cysteines and an exchangeable S-adenosyl-L-methionine.</text>
</comment>
<comment type="cofactor">
    <cofactor evidence="1">
        <name>[2Fe-2S] cluster</name>
        <dbReference type="ChEBI" id="CHEBI:190135"/>
    </cofactor>
    <text evidence="1">Binds 1 [2Fe-2S] cluster. The cluster is coordinated with 3 cysteines and 1 arginine.</text>
</comment>
<comment type="pathway">
    <text evidence="1">Cofactor biosynthesis; biotin biosynthesis; biotin from 7,8-diaminononanoate: step 2/2.</text>
</comment>
<comment type="subunit">
    <text evidence="1">Homodimer.</text>
</comment>
<comment type="similarity">
    <text evidence="1">Belongs to the radical SAM superfamily. Biotin synthase family.</text>
</comment>
<keyword id="KW-0001">2Fe-2S</keyword>
<keyword id="KW-0004">4Fe-4S</keyword>
<keyword id="KW-0093">Biotin biosynthesis</keyword>
<keyword id="KW-0408">Iron</keyword>
<keyword id="KW-0411">Iron-sulfur</keyword>
<keyword id="KW-0479">Metal-binding</keyword>
<keyword id="KW-1185">Reference proteome</keyword>
<keyword id="KW-0949">S-adenosyl-L-methionine</keyword>
<keyword id="KW-0808">Transferase</keyword>